<keyword id="KW-0028">Amino-acid biosynthesis</keyword>
<keyword id="KW-0963">Cytoplasm</keyword>
<keyword id="KW-0521">NADP</keyword>
<keyword id="KW-0560">Oxidoreductase</keyword>
<keyword id="KW-0641">Proline biosynthesis</keyword>
<keyword id="KW-1185">Reference proteome</keyword>
<protein>
    <recommendedName>
        <fullName evidence="1">Gamma-glutamyl phosphate reductase</fullName>
        <shortName evidence="1">GPR</shortName>
        <ecNumber evidence="1">1.2.1.41</ecNumber>
    </recommendedName>
    <alternativeName>
        <fullName evidence="1">Glutamate-5-semialdehyde dehydrogenase</fullName>
    </alternativeName>
    <alternativeName>
        <fullName evidence="1">Glutamyl-gamma-semialdehyde dehydrogenase</fullName>
        <shortName evidence="1">GSA dehydrogenase</shortName>
    </alternativeName>
</protein>
<feature type="chain" id="PRO_0000189724" description="Gamma-glutamyl phosphate reductase">
    <location>
        <begin position="1"/>
        <end position="417"/>
    </location>
</feature>
<gene>
    <name evidence="1" type="primary">proA</name>
    <name type="ordered locus">c0390</name>
</gene>
<dbReference type="EC" id="1.2.1.41" evidence="1"/>
<dbReference type="EMBL" id="AE014075">
    <property type="protein sequence ID" value="AAN78871.1"/>
    <property type="molecule type" value="Genomic_DNA"/>
</dbReference>
<dbReference type="RefSeq" id="WP_000893307.1">
    <property type="nucleotide sequence ID" value="NZ_CP051263.1"/>
</dbReference>
<dbReference type="SMR" id="Q8FKM3"/>
<dbReference type="STRING" id="199310.c0390"/>
<dbReference type="KEGG" id="ecc:c0390"/>
<dbReference type="eggNOG" id="COG0014">
    <property type="taxonomic scope" value="Bacteria"/>
</dbReference>
<dbReference type="HOGENOM" id="CLU_030231_0_0_6"/>
<dbReference type="BioCyc" id="ECOL199310:C0390-MONOMER"/>
<dbReference type="UniPathway" id="UPA00098">
    <property type="reaction ID" value="UER00360"/>
</dbReference>
<dbReference type="Proteomes" id="UP000001410">
    <property type="component" value="Chromosome"/>
</dbReference>
<dbReference type="GO" id="GO:0005737">
    <property type="term" value="C:cytoplasm"/>
    <property type="evidence" value="ECO:0007669"/>
    <property type="project" value="UniProtKB-SubCell"/>
</dbReference>
<dbReference type="GO" id="GO:0004350">
    <property type="term" value="F:glutamate-5-semialdehyde dehydrogenase activity"/>
    <property type="evidence" value="ECO:0007669"/>
    <property type="project" value="UniProtKB-UniRule"/>
</dbReference>
<dbReference type="GO" id="GO:0050661">
    <property type="term" value="F:NADP binding"/>
    <property type="evidence" value="ECO:0007669"/>
    <property type="project" value="InterPro"/>
</dbReference>
<dbReference type="GO" id="GO:0055129">
    <property type="term" value="P:L-proline biosynthetic process"/>
    <property type="evidence" value="ECO:0007669"/>
    <property type="project" value="UniProtKB-UniRule"/>
</dbReference>
<dbReference type="CDD" id="cd07079">
    <property type="entry name" value="ALDH_F18-19_ProA-GPR"/>
    <property type="match status" value="1"/>
</dbReference>
<dbReference type="FunFam" id="3.40.309.10:FF:000006">
    <property type="entry name" value="Gamma-glutamyl phosphate reductase"/>
    <property type="match status" value="1"/>
</dbReference>
<dbReference type="Gene3D" id="3.40.605.10">
    <property type="entry name" value="Aldehyde Dehydrogenase, Chain A, domain 1"/>
    <property type="match status" value="1"/>
</dbReference>
<dbReference type="Gene3D" id="3.40.309.10">
    <property type="entry name" value="Aldehyde Dehydrogenase, Chain A, domain 2"/>
    <property type="match status" value="1"/>
</dbReference>
<dbReference type="HAMAP" id="MF_00412">
    <property type="entry name" value="ProA"/>
    <property type="match status" value="1"/>
</dbReference>
<dbReference type="InterPro" id="IPR016161">
    <property type="entry name" value="Ald_DH/histidinol_DH"/>
</dbReference>
<dbReference type="InterPro" id="IPR016163">
    <property type="entry name" value="Ald_DH_C"/>
</dbReference>
<dbReference type="InterPro" id="IPR016162">
    <property type="entry name" value="Ald_DH_N"/>
</dbReference>
<dbReference type="InterPro" id="IPR015590">
    <property type="entry name" value="Aldehyde_DH_dom"/>
</dbReference>
<dbReference type="InterPro" id="IPR020593">
    <property type="entry name" value="G-glutamylP_reductase_CS"/>
</dbReference>
<dbReference type="InterPro" id="IPR012134">
    <property type="entry name" value="Glu-5-SA_DH"/>
</dbReference>
<dbReference type="InterPro" id="IPR000965">
    <property type="entry name" value="GPR_dom"/>
</dbReference>
<dbReference type="NCBIfam" id="NF001221">
    <property type="entry name" value="PRK00197.1"/>
    <property type="match status" value="1"/>
</dbReference>
<dbReference type="NCBIfam" id="TIGR00407">
    <property type="entry name" value="proA"/>
    <property type="match status" value="1"/>
</dbReference>
<dbReference type="PANTHER" id="PTHR11063:SF8">
    <property type="entry name" value="DELTA-1-PYRROLINE-5-CARBOXYLATE SYNTHASE"/>
    <property type="match status" value="1"/>
</dbReference>
<dbReference type="PANTHER" id="PTHR11063">
    <property type="entry name" value="GLUTAMATE SEMIALDEHYDE DEHYDROGENASE"/>
    <property type="match status" value="1"/>
</dbReference>
<dbReference type="Pfam" id="PF00171">
    <property type="entry name" value="Aldedh"/>
    <property type="match status" value="1"/>
</dbReference>
<dbReference type="PIRSF" id="PIRSF000151">
    <property type="entry name" value="GPR"/>
    <property type="match status" value="1"/>
</dbReference>
<dbReference type="SUPFAM" id="SSF53720">
    <property type="entry name" value="ALDH-like"/>
    <property type="match status" value="1"/>
</dbReference>
<dbReference type="PROSITE" id="PS01223">
    <property type="entry name" value="PROA"/>
    <property type="match status" value="1"/>
</dbReference>
<accession>Q8FKM3</accession>
<comment type="function">
    <text evidence="1">Catalyzes the NADPH-dependent reduction of L-glutamate 5-phosphate into L-glutamate 5-semialdehyde and phosphate. The product spontaneously undergoes cyclization to form 1-pyrroline-5-carboxylate.</text>
</comment>
<comment type="catalytic activity">
    <reaction evidence="1">
        <text>L-glutamate 5-semialdehyde + phosphate + NADP(+) = L-glutamyl 5-phosphate + NADPH + H(+)</text>
        <dbReference type="Rhea" id="RHEA:19541"/>
        <dbReference type="ChEBI" id="CHEBI:15378"/>
        <dbReference type="ChEBI" id="CHEBI:43474"/>
        <dbReference type="ChEBI" id="CHEBI:57783"/>
        <dbReference type="ChEBI" id="CHEBI:58066"/>
        <dbReference type="ChEBI" id="CHEBI:58274"/>
        <dbReference type="ChEBI" id="CHEBI:58349"/>
        <dbReference type="EC" id="1.2.1.41"/>
    </reaction>
</comment>
<comment type="pathway">
    <text evidence="1">Amino-acid biosynthesis; L-proline biosynthesis; L-glutamate 5-semialdehyde from L-glutamate: step 2/2.</text>
</comment>
<comment type="subcellular location">
    <subcellularLocation>
        <location evidence="1">Cytoplasm</location>
    </subcellularLocation>
</comment>
<comment type="similarity">
    <text evidence="1">Belongs to the gamma-glutamyl phosphate reductase family.</text>
</comment>
<reference key="1">
    <citation type="journal article" date="2002" name="Proc. Natl. Acad. Sci. U.S.A.">
        <title>Extensive mosaic structure revealed by the complete genome sequence of uropathogenic Escherichia coli.</title>
        <authorList>
            <person name="Welch R.A."/>
            <person name="Burland V."/>
            <person name="Plunkett G. III"/>
            <person name="Redford P."/>
            <person name="Roesch P."/>
            <person name="Rasko D."/>
            <person name="Buckles E.L."/>
            <person name="Liou S.-R."/>
            <person name="Boutin A."/>
            <person name="Hackett J."/>
            <person name="Stroud D."/>
            <person name="Mayhew G.F."/>
            <person name="Rose D.J."/>
            <person name="Zhou S."/>
            <person name="Schwartz D.C."/>
            <person name="Perna N.T."/>
            <person name="Mobley H.L.T."/>
            <person name="Donnenberg M.S."/>
            <person name="Blattner F.R."/>
        </authorList>
    </citation>
    <scope>NUCLEOTIDE SEQUENCE [LARGE SCALE GENOMIC DNA]</scope>
    <source>
        <strain>CFT073 / ATCC 700928 / UPEC</strain>
    </source>
</reference>
<proteinExistence type="inferred from homology"/>
<sequence>MLEQMGIAAKQASYKLAQLSSREKNRVLEKIADELEAQSESILNANAQDVADARANGLSEAMLDRLALTPARLKGIADDVRQVCNLADPVGQVIDGGVLDSGLRLERRRVPLGVIGVIYEARPNVTVDVASLCLKTGNAVILRGGKETCRTNAATVAVIQDALKSCGLPAGAVQAIDNPDRALVSEMLRMDKYIDMLIPRGGAGLHKLCREQSTIPVITGGIGVCHIYVDESAEIAEVLKVIVNAKTQRPSTCNTVETLLVNKNIADSFLPALSKQMAESGVTLHADAAALAQLQTGPAKVVAVKAEEYDDEFLSLDLNVKIVSDLDDAIAHIREHGTQHSDAILTRDMRNAQRFVNEVDSSAVYVNASTRFTDGGQFGLGAEVAVSTQKLHARGPMGLEALTTYKWIGIGDYTIRA</sequence>
<evidence type="ECO:0000255" key="1">
    <source>
        <dbReference type="HAMAP-Rule" id="MF_00412"/>
    </source>
</evidence>
<name>PROA_ECOL6</name>
<organism>
    <name type="scientific">Escherichia coli O6:H1 (strain CFT073 / ATCC 700928 / UPEC)</name>
    <dbReference type="NCBI Taxonomy" id="199310"/>
    <lineage>
        <taxon>Bacteria</taxon>
        <taxon>Pseudomonadati</taxon>
        <taxon>Pseudomonadota</taxon>
        <taxon>Gammaproteobacteria</taxon>
        <taxon>Enterobacterales</taxon>
        <taxon>Enterobacteriaceae</taxon>
        <taxon>Escherichia</taxon>
    </lineage>
</organism>